<gene>
    <name type="primary">holn1</name>
    <name type="ORF">CG5198</name>
</gene>
<name>CD2B2_DROME</name>
<organism>
    <name type="scientific">Drosophila melanogaster</name>
    <name type="common">Fruit fly</name>
    <dbReference type="NCBI Taxonomy" id="7227"/>
    <lineage>
        <taxon>Eukaryota</taxon>
        <taxon>Metazoa</taxon>
        <taxon>Ecdysozoa</taxon>
        <taxon>Arthropoda</taxon>
        <taxon>Hexapoda</taxon>
        <taxon>Insecta</taxon>
        <taxon>Pterygota</taxon>
        <taxon>Neoptera</taxon>
        <taxon>Endopterygota</taxon>
        <taxon>Diptera</taxon>
        <taxon>Brachycera</taxon>
        <taxon>Muscomorpha</taxon>
        <taxon>Ephydroidea</taxon>
        <taxon>Drosophilidae</taxon>
        <taxon>Drosophila</taxon>
        <taxon>Sophophora</taxon>
    </lineage>
</organism>
<feature type="chain" id="PRO_0000195039" description="CD2 antigen cytoplasmic tail-binding protein 2 homolog">
    <location>
        <begin position="1"/>
        <end position="319"/>
    </location>
</feature>
<feature type="domain" description="GYF" evidence="1">
    <location>
        <begin position="260"/>
        <end position="316"/>
    </location>
</feature>
<feature type="region of interest" description="Disordered" evidence="2">
    <location>
        <begin position="1"/>
        <end position="57"/>
    </location>
</feature>
<feature type="region of interest" description="Disordered" evidence="2">
    <location>
        <begin position="105"/>
        <end position="124"/>
    </location>
</feature>
<feature type="compositionally biased region" description="Basic and acidic residues" evidence="2">
    <location>
        <begin position="12"/>
        <end position="24"/>
    </location>
</feature>
<feature type="compositionally biased region" description="Acidic residues" evidence="2">
    <location>
        <begin position="25"/>
        <end position="47"/>
    </location>
</feature>
<feature type="compositionally biased region" description="Basic and acidic residues" evidence="2">
    <location>
        <begin position="109"/>
        <end position="124"/>
    </location>
</feature>
<feature type="modified residue" description="Phosphoserine" evidence="3">
    <location>
        <position position="25"/>
    </location>
</feature>
<feature type="modified residue" description="Phosphoserine" evidence="3">
    <location>
        <position position="30"/>
    </location>
</feature>
<feature type="modified residue" description="Phosphotyrosine" evidence="3">
    <location>
        <position position="37"/>
    </location>
</feature>
<feature type="modified residue" description="Phosphoserine" evidence="3">
    <location>
        <position position="41"/>
    </location>
</feature>
<feature type="sequence conflict" description="In Ref. 3; AAL39272." evidence="6" ref="3">
    <original>M</original>
    <variation>I</variation>
    <location>
        <position position="64"/>
    </location>
</feature>
<protein>
    <recommendedName>
        <fullName>CD2 antigen cytoplasmic tail-binding protein 2 homolog</fullName>
    </recommendedName>
    <alternativeName>
        <fullName>Protein hole-in-one</fullName>
    </alternativeName>
</protein>
<keyword id="KW-0217">Developmental protein</keyword>
<keyword id="KW-0539">Nucleus</keyword>
<keyword id="KW-0597">Phosphoprotein</keyword>
<keyword id="KW-1185">Reference proteome</keyword>
<sequence length="319" mass="36838">MASKRKHQASQKVKEESFKKHTLDSDEEDSDDYEREYLNDSDIEGGEEGVAKVEDDVKVTPFNMKEELEEGHFDKDGHYHWNKETEAKDNWLDNIDWVKIGTQKNAFDPAKDEENSSDEEKNEPVGKAFNLSMNLMKMVEFMKPGETVKMTLQRLGKQRPVLTTLQRIKQKKAGIVDPKTQEISQLTELANEILSKTGNMDIYQDTYESIKAKIADLPGTSKPKVADDIDMYADDFETKELERSKTSSSDSSKPTTTTSEVTWEFKWSQDETDIQGPFSTEKMLKWSQENYFKNGVYVRKCGENTNFYTSNRIDFDLYL</sequence>
<evidence type="ECO:0000255" key="1">
    <source>
        <dbReference type="PROSITE-ProRule" id="PRU00101"/>
    </source>
</evidence>
<evidence type="ECO:0000256" key="2">
    <source>
        <dbReference type="SAM" id="MobiDB-lite"/>
    </source>
</evidence>
<evidence type="ECO:0000269" key="3">
    <source>
    </source>
</evidence>
<evidence type="ECO:0000269" key="4">
    <source>
    </source>
</evidence>
<evidence type="ECO:0000269" key="5">
    <source>
    </source>
</evidence>
<evidence type="ECO:0000305" key="6"/>
<dbReference type="EMBL" id="AE014134">
    <property type="protein sequence ID" value="AAF52953.1"/>
    <property type="molecule type" value="Genomic_DNA"/>
</dbReference>
<dbReference type="EMBL" id="AY069127">
    <property type="protein sequence ID" value="AAL39272.1"/>
    <property type="molecule type" value="mRNA"/>
</dbReference>
<dbReference type="EMBL" id="BT088782">
    <property type="protein sequence ID" value="ACS12715.1"/>
    <property type="molecule type" value="mRNA"/>
</dbReference>
<dbReference type="RefSeq" id="NP_609404.2">
    <property type="nucleotide sequence ID" value="NM_135560.3"/>
</dbReference>
<dbReference type="SMR" id="Q9VKV5"/>
<dbReference type="BioGRID" id="60513">
    <property type="interactions" value="6"/>
</dbReference>
<dbReference type="FunCoup" id="Q9VKV5">
    <property type="interactions" value="1803"/>
</dbReference>
<dbReference type="IntAct" id="Q9VKV5">
    <property type="interactions" value="21"/>
</dbReference>
<dbReference type="STRING" id="7227.FBpp0079616"/>
<dbReference type="iPTMnet" id="Q9VKV5"/>
<dbReference type="PaxDb" id="7227-FBpp0079616"/>
<dbReference type="DNASU" id="34432"/>
<dbReference type="EnsemblMetazoa" id="FBtr0080026">
    <property type="protein sequence ID" value="FBpp0079616"/>
    <property type="gene ID" value="FBgn0032250"/>
</dbReference>
<dbReference type="GeneID" id="34432"/>
<dbReference type="KEGG" id="dme:Dmel_CG5198"/>
<dbReference type="UCSC" id="CG5198-RA">
    <property type="organism name" value="d. melanogaster"/>
</dbReference>
<dbReference type="AGR" id="FB:FBgn0032250"/>
<dbReference type="CTD" id="34432"/>
<dbReference type="FlyBase" id="FBgn0032250">
    <property type="gene designation" value="holn1"/>
</dbReference>
<dbReference type="VEuPathDB" id="VectorBase:FBgn0032250"/>
<dbReference type="eggNOG" id="KOG2950">
    <property type="taxonomic scope" value="Eukaryota"/>
</dbReference>
<dbReference type="GeneTree" id="ENSGT00390000012483"/>
<dbReference type="HOGENOM" id="CLU_062973_0_0_1"/>
<dbReference type="InParanoid" id="Q9VKV5"/>
<dbReference type="OMA" id="GENTNFY"/>
<dbReference type="OrthoDB" id="331341at2759"/>
<dbReference type="PhylomeDB" id="Q9VKV5"/>
<dbReference type="BioGRID-ORCS" id="34432">
    <property type="hits" value="0 hits in 1 CRISPR screen"/>
</dbReference>
<dbReference type="GenomeRNAi" id="34432"/>
<dbReference type="PRO" id="PR:Q9VKV5"/>
<dbReference type="Proteomes" id="UP000000803">
    <property type="component" value="Chromosome 2L"/>
</dbReference>
<dbReference type="Bgee" id="FBgn0032250">
    <property type="expression patterns" value="Expressed in egg cell and 71 other cell types or tissues"/>
</dbReference>
<dbReference type="GO" id="GO:0005634">
    <property type="term" value="C:nucleus"/>
    <property type="evidence" value="ECO:0000314"/>
    <property type="project" value="FlyBase"/>
</dbReference>
<dbReference type="GO" id="GO:0005682">
    <property type="term" value="C:U5 snRNP"/>
    <property type="evidence" value="ECO:0000250"/>
    <property type="project" value="FlyBase"/>
</dbReference>
<dbReference type="GO" id="GO:0022416">
    <property type="term" value="P:chaeta development"/>
    <property type="evidence" value="ECO:0000315"/>
    <property type="project" value="FlyBase"/>
</dbReference>
<dbReference type="GO" id="GO:0048749">
    <property type="term" value="P:compound eye development"/>
    <property type="evidence" value="ECO:0000315"/>
    <property type="project" value="FlyBase"/>
</dbReference>
<dbReference type="GO" id="GO:0090303">
    <property type="term" value="P:positive regulation of wound healing"/>
    <property type="evidence" value="ECO:0000315"/>
    <property type="project" value="FlyBase"/>
</dbReference>
<dbReference type="GO" id="GO:0035220">
    <property type="term" value="P:wing disc development"/>
    <property type="evidence" value="ECO:0000315"/>
    <property type="project" value="FlyBase"/>
</dbReference>
<dbReference type="GO" id="GO:0042060">
    <property type="term" value="P:wound healing"/>
    <property type="evidence" value="ECO:0007001"/>
    <property type="project" value="FlyBase"/>
</dbReference>
<dbReference type="CDD" id="cd00072">
    <property type="entry name" value="GYF"/>
    <property type="match status" value="1"/>
</dbReference>
<dbReference type="FunFam" id="3.30.1490.40:FF:000005">
    <property type="entry name" value="CD2 antigen cytoplasmic tail-binding protein 2"/>
    <property type="match status" value="1"/>
</dbReference>
<dbReference type="Gene3D" id="3.30.1490.40">
    <property type="match status" value="1"/>
</dbReference>
<dbReference type="InterPro" id="IPR039905">
    <property type="entry name" value="CD2BP2/Lin1"/>
</dbReference>
<dbReference type="InterPro" id="IPR003169">
    <property type="entry name" value="GYF"/>
</dbReference>
<dbReference type="InterPro" id="IPR035445">
    <property type="entry name" value="GYF-like_dom_sf"/>
</dbReference>
<dbReference type="PANTHER" id="PTHR13138:SF3">
    <property type="entry name" value="CD2 ANTIGEN CYTOPLASMIC TAIL-BINDING PROTEIN 2"/>
    <property type="match status" value="1"/>
</dbReference>
<dbReference type="PANTHER" id="PTHR13138">
    <property type="entry name" value="PROTEIN LIN1"/>
    <property type="match status" value="1"/>
</dbReference>
<dbReference type="Pfam" id="PF02213">
    <property type="entry name" value="GYF"/>
    <property type="match status" value="1"/>
</dbReference>
<dbReference type="SMART" id="SM00444">
    <property type="entry name" value="GYF"/>
    <property type="match status" value="1"/>
</dbReference>
<dbReference type="SUPFAM" id="SSF55277">
    <property type="entry name" value="GYF domain"/>
    <property type="match status" value="1"/>
</dbReference>
<dbReference type="PROSITE" id="PS50829">
    <property type="entry name" value="GYF"/>
    <property type="match status" value="1"/>
</dbReference>
<reference key="1">
    <citation type="journal article" date="2000" name="Science">
        <title>The genome sequence of Drosophila melanogaster.</title>
        <authorList>
            <person name="Adams M.D."/>
            <person name="Celniker S.E."/>
            <person name="Holt R.A."/>
            <person name="Evans C.A."/>
            <person name="Gocayne J.D."/>
            <person name="Amanatides P.G."/>
            <person name="Scherer S.E."/>
            <person name="Li P.W."/>
            <person name="Hoskins R.A."/>
            <person name="Galle R.F."/>
            <person name="George R.A."/>
            <person name="Lewis S.E."/>
            <person name="Richards S."/>
            <person name="Ashburner M."/>
            <person name="Henderson S.N."/>
            <person name="Sutton G.G."/>
            <person name="Wortman J.R."/>
            <person name="Yandell M.D."/>
            <person name="Zhang Q."/>
            <person name="Chen L.X."/>
            <person name="Brandon R.C."/>
            <person name="Rogers Y.-H.C."/>
            <person name="Blazej R.G."/>
            <person name="Champe M."/>
            <person name="Pfeiffer B.D."/>
            <person name="Wan K.H."/>
            <person name="Doyle C."/>
            <person name="Baxter E.G."/>
            <person name="Helt G."/>
            <person name="Nelson C.R."/>
            <person name="Miklos G.L.G."/>
            <person name="Abril J.F."/>
            <person name="Agbayani A."/>
            <person name="An H.-J."/>
            <person name="Andrews-Pfannkoch C."/>
            <person name="Baldwin D."/>
            <person name="Ballew R.M."/>
            <person name="Basu A."/>
            <person name="Baxendale J."/>
            <person name="Bayraktaroglu L."/>
            <person name="Beasley E.M."/>
            <person name="Beeson K.Y."/>
            <person name="Benos P.V."/>
            <person name="Berman B.P."/>
            <person name="Bhandari D."/>
            <person name="Bolshakov S."/>
            <person name="Borkova D."/>
            <person name="Botchan M.R."/>
            <person name="Bouck J."/>
            <person name="Brokstein P."/>
            <person name="Brottier P."/>
            <person name="Burtis K.C."/>
            <person name="Busam D.A."/>
            <person name="Butler H."/>
            <person name="Cadieu E."/>
            <person name="Center A."/>
            <person name="Chandra I."/>
            <person name="Cherry J.M."/>
            <person name="Cawley S."/>
            <person name="Dahlke C."/>
            <person name="Davenport L.B."/>
            <person name="Davies P."/>
            <person name="de Pablos B."/>
            <person name="Delcher A."/>
            <person name="Deng Z."/>
            <person name="Mays A.D."/>
            <person name="Dew I."/>
            <person name="Dietz S.M."/>
            <person name="Dodson K."/>
            <person name="Doup L.E."/>
            <person name="Downes M."/>
            <person name="Dugan-Rocha S."/>
            <person name="Dunkov B.C."/>
            <person name="Dunn P."/>
            <person name="Durbin K.J."/>
            <person name="Evangelista C.C."/>
            <person name="Ferraz C."/>
            <person name="Ferriera S."/>
            <person name="Fleischmann W."/>
            <person name="Fosler C."/>
            <person name="Gabrielian A.E."/>
            <person name="Garg N.S."/>
            <person name="Gelbart W.M."/>
            <person name="Glasser K."/>
            <person name="Glodek A."/>
            <person name="Gong F."/>
            <person name="Gorrell J.H."/>
            <person name="Gu Z."/>
            <person name="Guan P."/>
            <person name="Harris M."/>
            <person name="Harris N.L."/>
            <person name="Harvey D.A."/>
            <person name="Heiman T.J."/>
            <person name="Hernandez J.R."/>
            <person name="Houck J."/>
            <person name="Hostin D."/>
            <person name="Houston K.A."/>
            <person name="Howland T.J."/>
            <person name="Wei M.-H."/>
            <person name="Ibegwam C."/>
            <person name="Jalali M."/>
            <person name="Kalush F."/>
            <person name="Karpen G.H."/>
            <person name="Ke Z."/>
            <person name="Kennison J.A."/>
            <person name="Ketchum K.A."/>
            <person name="Kimmel B.E."/>
            <person name="Kodira C.D."/>
            <person name="Kraft C.L."/>
            <person name="Kravitz S."/>
            <person name="Kulp D."/>
            <person name="Lai Z."/>
            <person name="Lasko P."/>
            <person name="Lei Y."/>
            <person name="Levitsky A.A."/>
            <person name="Li J.H."/>
            <person name="Li Z."/>
            <person name="Liang Y."/>
            <person name="Lin X."/>
            <person name="Liu X."/>
            <person name="Mattei B."/>
            <person name="McIntosh T.C."/>
            <person name="McLeod M.P."/>
            <person name="McPherson D."/>
            <person name="Merkulov G."/>
            <person name="Milshina N.V."/>
            <person name="Mobarry C."/>
            <person name="Morris J."/>
            <person name="Moshrefi A."/>
            <person name="Mount S.M."/>
            <person name="Moy M."/>
            <person name="Murphy B."/>
            <person name="Murphy L."/>
            <person name="Muzny D.M."/>
            <person name="Nelson D.L."/>
            <person name="Nelson D.R."/>
            <person name="Nelson K.A."/>
            <person name="Nixon K."/>
            <person name="Nusskern D.R."/>
            <person name="Pacleb J.M."/>
            <person name="Palazzolo M."/>
            <person name="Pittman G.S."/>
            <person name="Pan S."/>
            <person name="Pollard J."/>
            <person name="Puri V."/>
            <person name="Reese M.G."/>
            <person name="Reinert K."/>
            <person name="Remington K."/>
            <person name="Saunders R.D.C."/>
            <person name="Scheeler F."/>
            <person name="Shen H."/>
            <person name="Shue B.C."/>
            <person name="Siden-Kiamos I."/>
            <person name="Simpson M."/>
            <person name="Skupski M.P."/>
            <person name="Smith T.J."/>
            <person name="Spier E."/>
            <person name="Spradling A.C."/>
            <person name="Stapleton M."/>
            <person name="Strong R."/>
            <person name="Sun E."/>
            <person name="Svirskas R."/>
            <person name="Tector C."/>
            <person name="Turner R."/>
            <person name="Venter E."/>
            <person name="Wang A.H."/>
            <person name="Wang X."/>
            <person name="Wang Z.-Y."/>
            <person name="Wassarman D.A."/>
            <person name="Weinstock G.M."/>
            <person name="Weissenbach J."/>
            <person name="Williams S.M."/>
            <person name="Woodage T."/>
            <person name="Worley K.C."/>
            <person name="Wu D."/>
            <person name="Yang S."/>
            <person name="Yao Q.A."/>
            <person name="Ye J."/>
            <person name="Yeh R.-F."/>
            <person name="Zaveri J.S."/>
            <person name="Zhan M."/>
            <person name="Zhang G."/>
            <person name="Zhao Q."/>
            <person name="Zheng L."/>
            <person name="Zheng X.H."/>
            <person name="Zhong F.N."/>
            <person name="Zhong W."/>
            <person name="Zhou X."/>
            <person name="Zhu S.C."/>
            <person name="Zhu X."/>
            <person name="Smith H.O."/>
            <person name="Gibbs R.A."/>
            <person name="Myers E.W."/>
            <person name="Rubin G.M."/>
            <person name="Venter J.C."/>
        </authorList>
    </citation>
    <scope>NUCLEOTIDE SEQUENCE [LARGE SCALE GENOMIC DNA]</scope>
    <source>
        <strain>Berkeley</strain>
    </source>
</reference>
<reference key="2">
    <citation type="journal article" date="2002" name="Genome Biol.">
        <title>Annotation of the Drosophila melanogaster euchromatic genome: a systematic review.</title>
        <authorList>
            <person name="Misra S."/>
            <person name="Crosby M.A."/>
            <person name="Mungall C.J."/>
            <person name="Matthews B.B."/>
            <person name="Campbell K.S."/>
            <person name="Hradecky P."/>
            <person name="Huang Y."/>
            <person name="Kaminker J.S."/>
            <person name="Millburn G.H."/>
            <person name="Prochnik S.E."/>
            <person name="Smith C.D."/>
            <person name="Tupy J.L."/>
            <person name="Whitfield E.J."/>
            <person name="Bayraktaroglu L."/>
            <person name="Berman B.P."/>
            <person name="Bettencourt B.R."/>
            <person name="Celniker S.E."/>
            <person name="de Grey A.D.N.J."/>
            <person name="Drysdale R.A."/>
            <person name="Harris N.L."/>
            <person name="Richter J."/>
            <person name="Russo S."/>
            <person name="Schroeder A.J."/>
            <person name="Shu S.Q."/>
            <person name="Stapleton M."/>
            <person name="Yamada C."/>
            <person name="Ashburner M."/>
            <person name="Gelbart W.M."/>
            <person name="Rubin G.M."/>
            <person name="Lewis S.E."/>
        </authorList>
    </citation>
    <scope>GENOME REANNOTATION</scope>
    <source>
        <strain>Berkeley</strain>
    </source>
</reference>
<reference key="3">
    <citation type="journal article" date="2002" name="Genome Biol.">
        <title>A Drosophila full-length cDNA resource.</title>
        <authorList>
            <person name="Stapleton M."/>
            <person name="Carlson J.W."/>
            <person name="Brokstein P."/>
            <person name="Yu C."/>
            <person name="Champe M."/>
            <person name="George R.A."/>
            <person name="Guarin H."/>
            <person name="Kronmiller B."/>
            <person name="Pacleb J.M."/>
            <person name="Park S."/>
            <person name="Wan K.H."/>
            <person name="Rubin G.M."/>
            <person name="Celniker S.E."/>
        </authorList>
    </citation>
    <scope>NUCLEOTIDE SEQUENCE [LARGE SCALE MRNA]</scope>
    <source>
        <strain>Berkeley</strain>
        <tissue>Head</tissue>
    </source>
</reference>
<reference key="4">
    <citation type="submission" date="2009-06" db="EMBL/GenBank/DDBJ databases">
        <authorList>
            <person name="Carlson J."/>
            <person name="Booth B."/>
            <person name="Frise E."/>
            <person name="Park S."/>
            <person name="Wan K."/>
            <person name="Yu C."/>
            <person name="Celniker S."/>
        </authorList>
    </citation>
    <scope>NUCLEOTIDE SEQUENCE [LARGE SCALE MRNA]</scope>
</reference>
<reference key="5">
    <citation type="journal article" date="2008" name="J. Proteome Res.">
        <title>Phosphoproteome analysis of Drosophila melanogaster embryos.</title>
        <authorList>
            <person name="Zhai B."/>
            <person name="Villen J."/>
            <person name="Beausoleil S.A."/>
            <person name="Mintseris J."/>
            <person name="Gygi S.P."/>
        </authorList>
    </citation>
    <scope>PHOSPHORYLATION [LARGE SCALE ANALYSIS] AT SER-25; SER-30; TYR-37 AND SER-41</scope>
    <scope>IDENTIFICATION BY MASS SPECTROMETRY</scope>
    <source>
        <tissue>Embryo</tissue>
    </source>
</reference>
<reference key="6">
    <citation type="journal article" date="2010" name="Genetics">
        <title>Genetic screen in Drosophila melanogaster uncovers a novel set of genes required for embryonic epithelial repair.</title>
        <authorList>
            <person name="Campos I."/>
            <person name="Geiger J.A."/>
            <person name="Santos A.C."/>
            <person name="Carlos V."/>
            <person name="Jacinto A."/>
        </authorList>
    </citation>
    <scope>FUNCTION</scope>
    <scope>DISRUPTION PHENOTYPE</scope>
</reference>
<reference key="7">
    <citation type="journal article" date="2011" name="PLoS ONE">
        <title>Hole-in-one mutant phenotypes link EGFR/ERK signaling to epithelial tissue repair in Drosophila.</title>
        <authorList>
            <person name="Geiger J.A."/>
            <person name="Carvalho L."/>
            <person name="Campos I."/>
            <person name="Santos A.C."/>
            <person name="Jacinto A."/>
        </authorList>
    </citation>
    <scope>FUNCTION</scope>
    <scope>SUBCELLULAR LOCATION</scope>
    <scope>DEVELOPMENTAL STAGE</scope>
    <scope>DISRUPTION PHENOTYPE</scope>
</reference>
<proteinExistence type="evidence at protein level"/>
<comment type="function">
    <text evidence="4 5">Required for embryonic epithelial tissue repair, but not for the assembly of the actomyosin cable at the wound edge. Probably acts downstream of rl in the regulation of Ddc and msn transcription to promote wound healing.</text>
</comment>
<comment type="subcellular location">
    <subcellularLocation>
        <location evidence="5">Nucleus</location>
    </subcellularLocation>
</comment>
<comment type="developmental stage">
    <text evidence="5">Expressed maternally and zygotically. Expression is ubiquitous throughout embryonic development.</text>
</comment>
<comment type="disruption phenotype">
    <text evidence="4 5">Embryonic lethal. Embryonic wound healing defects. The few adult escapers show subtle rough eye phenotype and extra and/or misplaced or missing macrochaetae on the scutellum.</text>
</comment>
<accession>Q9VKV5</accession>
<accession>C4XVH8</accession>
<accession>Q8T0Q7</accession>